<comment type="function">
    <text evidence="3 4">The small GTPases Rab are key regulators of intracellular membrane trafficking, from the formation of transport vesicles to their fusion with membranes. Rabs cycle between an inactive GDP-bound form and an active GTP-bound form that is able to recruit to membranes different sets of downstream effectors directly responsible for vesicle formation, movement, tethering and fusion. RAB4A is involved in protein transport. Also plays a role in vesicular traffic. Mediates VEGFR2 endosomal trafficking to enhance VEGFR2 signaling (By similarity). Acts as a regulator of platelet alpha-granule release during activation and aggregation of platelets (By similarity).</text>
</comment>
<comment type="catalytic activity">
    <reaction evidence="3">
        <text>GTP + H2O = GDP + phosphate + H(+)</text>
        <dbReference type="Rhea" id="RHEA:19669"/>
        <dbReference type="ChEBI" id="CHEBI:15377"/>
        <dbReference type="ChEBI" id="CHEBI:15378"/>
        <dbReference type="ChEBI" id="CHEBI:37565"/>
        <dbReference type="ChEBI" id="CHEBI:43474"/>
        <dbReference type="ChEBI" id="CHEBI:58189"/>
        <dbReference type="EC" id="3.6.5.2"/>
    </reaction>
    <physiologicalReaction direction="left-to-right" evidence="3">
        <dbReference type="Rhea" id="RHEA:19670"/>
    </physiologicalReaction>
</comment>
<comment type="cofactor">
    <cofactor evidence="3">
        <name>Mg(2+)</name>
        <dbReference type="ChEBI" id="CHEBI:18420"/>
    </cofactor>
</comment>
<comment type="activity regulation">
    <text evidence="7">Regulated by guanine nucleotide exchange factors (GEFs) which promote the exchange of bound GDP for free GTP. Regulated by GTPase activating proteins (GAPs) which increase the GTP hydrolysis activity. Inhibited by GDP dissociation inhibitors (GDIs).</text>
</comment>
<comment type="subcellular location">
    <subcellularLocation>
        <location evidence="3">Membrane</location>
        <topology evidence="3">Peripheral membrane protein</topology>
    </subcellularLocation>
    <subcellularLocation>
        <location evidence="3">Cytoplasm</location>
    </subcellularLocation>
    <subcellularLocation>
        <location evidence="2">Early endosome membrane</location>
        <topology evidence="2">Peripheral membrane protein</topology>
    </subcellularLocation>
    <subcellularLocation>
        <location evidence="2">Recycling endosome membrane</location>
        <topology evidence="2">Peripheral membrane protein</topology>
    </subcellularLocation>
    <text evidence="3">Generally associated with membranes. Cytoplasmic when phosphorylated by CDK1.</text>
</comment>
<comment type="domain">
    <text evidence="6">Switch 1, switch 2 and the interswitch regions are characteristic of Rab GTPases and mediate the interactions with Rab downstream effectors. The switch regions undergo conformational changes upon nucleotide binding which drives interaction with specific sets of effector proteins, with most effectors only binding to GTP-bound Rab.</text>
</comment>
<comment type="similarity">
    <text evidence="7">Belongs to the small GTPase superfamily. Rab family.</text>
</comment>
<comment type="sequence caution" evidence="7">
    <conflict type="erroneous initiation">
        <sequence resource="EMBL-CDS" id="AAH56535"/>
    </conflict>
    <text>Extended N-terminus.</text>
</comment>
<keyword id="KW-0963">Cytoplasm</keyword>
<keyword id="KW-0967">Endosome</keyword>
<keyword id="KW-0342">GTP-binding</keyword>
<keyword id="KW-0378">Hydrolase</keyword>
<keyword id="KW-0449">Lipoprotein</keyword>
<keyword id="KW-0460">Magnesium</keyword>
<keyword id="KW-0472">Membrane</keyword>
<keyword id="KW-0479">Metal-binding</keyword>
<keyword id="KW-0488">Methylation</keyword>
<keyword id="KW-0547">Nucleotide-binding</keyword>
<keyword id="KW-0636">Prenylation</keyword>
<keyword id="KW-0653">Protein transport</keyword>
<keyword id="KW-1185">Reference proteome</keyword>
<keyword id="KW-0813">Transport</keyword>
<reference key="1">
    <citation type="submission" date="2003-08" db="EMBL/GenBank/DDBJ databases">
        <authorList>
            <consortium name="NIH - Zebrafish Gene Collection (ZGC) project"/>
        </authorList>
    </citation>
    <scope>NUCLEOTIDE SEQUENCE [LARGE SCALE MRNA]</scope>
    <source>
        <tissue>Kidney</tissue>
    </source>
</reference>
<accession>Q6PHI9</accession>
<protein>
    <recommendedName>
        <fullName>Ras-related protein Rab-4A</fullName>
        <ecNumber evidence="3">3.6.5.2</ecNumber>
    </recommendedName>
</protein>
<sequence length="213" mass="24002">MSETYDFLFKFLVIGNAGTGKSCLLHQFIEKRFKDDSNHTIGVEFGSKIISVVNKFVKLQIWDTAGQERFRSVTRSYYRGAAGALLVYDITSRETYNALTNWLTDARMLASQNIVIILCGNKKDLDADREVTFLEASRFAQENELMFLETSALTGENVEEAFVQCARKILNKIESGELDPERMGSGIQYGDAALRQLRSPRRAQAESIQECGC</sequence>
<proteinExistence type="evidence at transcript level"/>
<evidence type="ECO:0000250" key="1"/>
<evidence type="ECO:0000250" key="2">
    <source>
        <dbReference type="UniProtKB" id="P05714"/>
    </source>
</evidence>
<evidence type="ECO:0000250" key="3">
    <source>
        <dbReference type="UniProtKB" id="P20338"/>
    </source>
</evidence>
<evidence type="ECO:0000250" key="4">
    <source>
        <dbReference type="UniProtKB" id="P56371"/>
    </source>
</evidence>
<evidence type="ECO:0000250" key="5">
    <source>
        <dbReference type="UniProtKB" id="P61018"/>
    </source>
</evidence>
<evidence type="ECO:0000250" key="6">
    <source>
        <dbReference type="UniProtKB" id="P61106"/>
    </source>
</evidence>
<evidence type="ECO:0000305" key="7"/>
<name>RAB4A_DANRE</name>
<organism>
    <name type="scientific">Danio rerio</name>
    <name type="common">Zebrafish</name>
    <name type="synonym">Brachydanio rerio</name>
    <dbReference type="NCBI Taxonomy" id="7955"/>
    <lineage>
        <taxon>Eukaryota</taxon>
        <taxon>Metazoa</taxon>
        <taxon>Chordata</taxon>
        <taxon>Craniata</taxon>
        <taxon>Vertebrata</taxon>
        <taxon>Euteleostomi</taxon>
        <taxon>Actinopterygii</taxon>
        <taxon>Neopterygii</taxon>
        <taxon>Teleostei</taxon>
        <taxon>Ostariophysi</taxon>
        <taxon>Cypriniformes</taxon>
        <taxon>Danionidae</taxon>
        <taxon>Danioninae</taxon>
        <taxon>Danio</taxon>
    </lineage>
</organism>
<feature type="chain" id="PRO_0000121096" description="Ras-related protein Rab-4A">
    <location>
        <begin position="1"/>
        <end position="213"/>
    </location>
</feature>
<feature type="short sequence motif" description="Switch 1" evidence="6">
    <location>
        <begin position="39"/>
        <end position="44"/>
    </location>
</feature>
<feature type="short sequence motif" description="Switch 2" evidence="6">
    <location>
        <begin position="65"/>
        <end position="74"/>
    </location>
</feature>
<feature type="binding site" evidence="3">
    <location>
        <position position="18"/>
    </location>
    <ligand>
        <name>GTP</name>
        <dbReference type="ChEBI" id="CHEBI:37565"/>
    </ligand>
</feature>
<feature type="binding site" evidence="3">
    <location>
        <position position="19"/>
    </location>
    <ligand>
        <name>GTP</name>
        <dbReference type="ChEBI" id="CHEBI:37565"/>
    </ligand>
</feature>
<feature type="binding site" evidence="3">
    <location>
        <position position="20"/>
    </location>
    <ligand>
        <name>GTP</name>
        <dbReference type="ChEBI" id="CHEBI:37565"/>
    </ligand>
</feature>
<feature type="binding site" evidence="3">
    <location>
        <position position="21"/>
    </location>
    <ligand>
        <name>GTP</name>
        <dbReference type="ChEBI" id="CHEBI:37565"/>
    </ligand>
</feature>
<feature type="binding site" evidence="3">
    <location>
        <position position="22"/>
    </location>
    <ligand>
        <name>GTP</name>
        <dbReference type="ChEBI" id="CHEBI:37565"/>
    </ligand>
</feature>
<feature type="binding site" evidence="3">
    <location>
        <position position="22"/>
    </location>
    <ligand>
        <name>Mg(2+)</name>
        <dbReference type="ChEBI" id="CHEBI:18420"/>
    </ligand>
</feature>
<feature type="binding site" evidence="3">
    <location>
        <position position="23"/>
    </location>
    <ligand>
        <name>GTP</name>
        <dbReference type="ChEBI" id="CHEBI:37565"/>
    </ligand>
</feature>
<feature type="binding site" evidence="3">
    <location>
        <position position="37"/>
    </location>
    <ligand>
        <name>GTP</name>
        <dbReference type="ChEBI" id="CHEBI:37565"/>
    </ligand>
</feature>
<feature type="binding site" evidence="3">
    <location>
        <position position="39"/>
    </location>
    <ligand>
        <name>GTP</name>
        <dbReference type="ChEBI" id="CHEBI:37565"/>
    </ligand>
</feature>
<feature type="binding site" evidence="3">
    <location>
        <position position="40"/>
    </location>
    <ligand>
        <name>GTP</name>
        <dbReference type="ChEBI" id="CHEBI:37565"/>
    </ligand>
</feature>
<feature type="binding site" evidence="3">
    <location>
        <position position="40"/>
    </location>
    <ligand>
        <name>Mg(2+)</name>
        <dbReference type="ChEBI" id="CHEBI:18420"/>
    </ligand>
</feature>
<feature type="binding site" evidence="5">
    <location>
        <position position="63"/>
    </location>
    <ligand>
        <name>Mg(2+)</name>
        <dbReference type="ChEBI" id="CHEBI:18420"/>
    </ligand>
</feature>
<feature type="binding site" evidence="3">
    <location>
        <position position="66"/>
    </location>
    <ligand>
        <name>GTP</name>
        <dbReference type="ChEBI" id="CHEBI:37565"/>
    </ligand>
</feature>
<feature type="binding site" evidence="3">
    <location>
        <position position="121"/>
    </location>
    <ligand>
        <name>GTP</name>
        <dbReference type="ChEBI" id="CHEBI:37565"/>
    </ligand>
</feature>
<feature type="binding site" evidence="3">
    <location>
        <position position="122"/>
    </location>
    <ligand>
        <name>GTP</name>
        <dbReference type="ChEBI" id="CHEBI:37565"/>
    </ligand>
</feature>
<feature type="binding site" evidence="3">
    <location>
        <position position="124"/>
    </location>
    <ligand>
        <name>GTP</name>
        <dbReference type="ChEBI" id="CHEBI:37565"/>
    </ligand>
</feature>
<feature type="binding site" evidence="3">
    <location>
        <position position="152"/>
    </location>
    <ligand>
        <name>GTP</name>
        <dbReference type="ChEBI" id="CHEBI:37565"/>
    </ligand>
</feature>
<feature type="binding site" evidence="3">
    <location>
        <position position="153"/>
    </location>
    <ligand>
        <name>GTP</name>
        <dbReference type="ChEBI" id="CHEBI:37565"/>
    </ligand>
</feature>
<feature type="modified residue" description="Cysteine methyl ester" evidence="1">
    <location>
        <position position="213"/>
    </location>
</feature>
<feature type="lipid moiety-binding region" description="S-geranylgeranyl cysteine" evidence="1">
    <location>
        <position position="211"/>
    </location>
</feature>
<feature type="lipid moiety-binding region" description="S-geranylgeranyl cysteine" evidence="1">
    <location>
        <position position="213"/>
    </location>
</feature>
<gene>
    <name type="primary">rab4a</name>
</gene>
<dbReference type="EC" id="3.6.5.2" evidence="3"/>
<dbReference type="EMBL" id="BC056535">
    <property type="protein sequence ID" value="AAH56535.1"/>
    <property type="status" value="ALT_INIT"/>
    <property type="molecule type" value="mRNA"/>
</dbReference>
<dbReference type="RefSeq" id="NP_001119853.1">
    <property type="nucleotide sequence ID" value="NM_001126381.1"/>
</dbReference>
<dbReference type="SMR" id="Q6PHI9"/>
<dbReference type="FunCoup" id="Q6PHI9">
    <property type="interactions" value="919"/>
</dbReference>
<dbReference type="STRING" id="7955.ENSDARP00000012097"/>
<dbReference type="PaxDb" id="7955-ENSDARP00000012097"/>
<dbReference type="Ensembl" id="ENSDART00000004420">
    <property type="protein sequence ID" value="ENSDARP00000012097"/>
    <property type="gene ID" value="ENSDARG00000019144"/>
</dbReference>
<dbReference type="GeneID" id="403031"/>
<dbReference type="KEGG" id="dre:403031"/>
<dbReference type="AGR" id="ZFIN:ZDB-GENE-040525-1"/>
<dbReference type="CTD" id="5867"/>
<dbReference type="ZFIN" id="ZDB-GENE-040525-1">
    <property type="gene designation" value="rab4a"/>
</dbReference>
<dbReference type="eggNOG" id="KOG0086">
    <property type="taxonomic scope" value="Eukaryota"/>
</dbReference>
<dbReference type="HOGENOM" id="CLU_041217_23_1_1"/>
<dbReference type="InParanoid" id="Q6PHI9"/>
<dbReference type="OMA" id="HEEYALF"/>
<dbReference type="OrthoDB" id="9989112at2759"/>
<dbReference type="PhylomeDB" id="Q6PHI9"/>
<dbReference type="TreeFam" id="TF300032"/>
<dbReference type="Reactome" id="R-DRE-8854214">
    <property type="pathway name" value="TBC/RABGAPs"/>
</dbReference>
<dbReference type="Reactome" id="R-DRE-8873719">
    <property type="pathway name" value="RAB geranylgeranylation"/>
</dbReference>
<dbReference type="PRO" id="PR:Q6PHI9"/>
<dbReference type="Proteomes" id="UP000000437">
    <property type="component" value="Chromosome 13"/>
</dbReference>
<dbReference type="Bgee" id="ENSDARG00000019144">
    <property type="expression patterns" value="Expressed in brain and 23 other cell types or tissues"/>
</dbReference>
<dbReference type="ExpressionAtlas" id="Q6PHI9">
    <property type="expression patterns" value="baseline and differential"/>
</dbReference>
<dbReference type="GO" id="GO:0031901">
    <property type="term" value="C:early endosome membrane"/>
    <property type="evidence" value="ECO:0007669"/>
    <property type="project" value="UniProtKB-SubCell"/>
</dbReference>
<dbReference type="GO" id="GO:0032593">
    <property type="term" value="C:insulin-responsive compartment"/>
    <property type="evidence" value="ECO:0000318"/>
    <property type="project" value="GO_Central"/>
</dbReference>
<dbReference type="GO" id="GO:0055037">
    <property type="term" value="C:recycling endosome"/>
    <property type="evidence" value="ECO:0000318"/>
    <property type="project" value="GO_Central"/>
</dbReference>
<dbReference type="GO" id="GO:0055038">
    <property type="term" value="C:recycling endosome membrane"/>
    <property type="evidence" value="ECO:0007669"/>
    <property type="project" value="UniProtKB-SubCell"/>
</dbReference>
<dbReference type="GO" id="GO:0003925">
    <property type="term" value="F:G protein activity"/>
    <property type="evidence" value="ECO:0007669"/>
    <property type="project" value="UniProtKB-EC"/>
</dbReference>
<dbReference type="GO" id="GO:0005525">
    <property type="term" value="F:GTP binding"/>
    <property type="evidence" value="ECO:0000318"/>
    <property type="project" value="GO_Central"/>
</dbReference>
<dbReference type="GO" id="GO:0003924">
    <property type="term" value="F:GTPase activity"/>
    <property type="evidence" value="ECO:0000318"/>
    <property type="project" value="GO_Central"/>
</dbReference>
<dbReference type="GO" id="GO:0015031">
    <property type="term" value="P:protein transport"/>
    <property type="evidence" value="ECO:0007669"/>
    <property type="project" value="UniProtKB-KW"/>
</dbReference>
<dbReference type="GO" id="GO:0032482">
    <property type="term" value="P:Rab protein signal transduction"/>
    <property type="evidence" value="ECO:0007669"/>
    <property type="project" value="InterPro"/>
</dbReference>
<dbReference type="GO" id="GO:0030100">
    <property type="term" value="P:regulation of endocytosis"/>
    <property type="evidence" value="ECO:0000318"/>
    <property type="project" value="GO_Central"/>
</dbReference>
<dbReference type="GO" id="GO:0001944">
    <property type="term" value="P:vasculature development"/>
    <property type="evidence" value="ECO:0000315"/>
    <property type="project" value="ZFIN"/>
</dbReference>
<dbReference type="GO" id="GO:0016192">
    <property type="term" value="P:vesicle-mediated transport"/>
    <property type="evidence" value="ECO:0000318"/>
    <property type="project" value="GO_Central"/>
</dbReference>
<dbReference type="CDD" id="cd04113">
    <property type="entry name" value="Rab4"/>
    <property type="match status" value="1"/>
</dbReference>
<dbReference type="FunFam" id="3.40.50.300:FF:000280">
    <property type="entry name" value="Putative ras-related protein Rab-4B"/>
    <property type="match status" value="1"/>
</dbReference>
<dbReference type="Gene3D" id="3.40.50.300">
    <property type="entry name" value="P-loop containing nucleotide triphosphate hydrolases"/>
    <property type="match status" value="1"/>
</dbReference>
<dbReference type="InterPro" id="IPR027417">
    <property type="entry name" value="P-loop_NTPase"/>
</dbReference>
<dbReference type="InterPro" id="IPR041819">
    <property type="entry name" value="Rab4"/>
</dbReference>
<dbReference type="InterPro" id="IPR050209">
    <property type="entry name" value="Rab_GTPases_membrane_traffic"/>
</dbReference>
<dbReference type="InterPro" id="IPR005225">
    <property type="entry name" value="Small_GTP-bd"/>
</dbReference>
<dbReference type="InterPro" id="IPR001806">
    <property type="entry name" value="Small_GTPase"/>
</dbReference>
<dbReference type="NCBIfam" id="TIGR00231">
    <property type="entry name" value="small_GTP"/>
    <property type="match status" value="1"/>
</dbReference>
<dbReference type="PANTHER" id="PTHR47979">
    <property type="entry name" value="DRAB11-RELATED"/>
    <property type="match status" value="1"/>
</dbReference>
<dbReference type="Pfam" id="PF00071">
    <property type="entry name" value="Ras"/>
    <property type="match status" value="1"/>
</dbReference>
<dbReference type="PRINTS" id="PR00449">
    <property type="entry name" value="RASTRNSFRMNG"/>
</dbReference>
<dbReference type="SMART" id="SM00177">
    <property type="entry name" value="ARF"/>
    <property type="match status" value="1"/>
</dbReference>
<dbReference type="SMART" id="SM00175">
    <property type="entry name" value="RAB"/>
    <property type="match status" value="1"/>
</dbReference>
<dbReference type="SMART" id="SM00176">
    <property type="entry name" value="RAN"/>
    <property type="match status" value="1"/>
</dbReference>
<dbReference type="SMART" id="SM00173">
    <property type="entry name" value="RAS"/>
    <property type="match status" value="1"/>
</dbReference>
<dbReference type="SMART" id="SM00174">
    <property type="entry name" value="RHO"/>
    <property type="match status" value="1"/>
</dbReference>
<dbReference type="SUPFAM" id="SSF52540">
    <property type="entry name" value="P-loop containing nucleoside triphosphate hydrolases"/>
    <property type="match status" value="1"/>
</dbReference>
<dbReference type="PROSITE" id="PS51419">
    <property type="entry name" value="RAB"/>
    <property type="match status" value="1"/>
</dbReference>